<feature type="chain" id="PRO_0000350442" description="Probable dual-specificity RNA methyltransferase RlmN">
    <location>
        <begin position="1"/>
        <end position="364"/>
    </location>
</feature>
<feature type="domain" description="Radical SAM core" evidence="2">
    <location>
        <begin position="113"/>
        <end position="346"/>
    </location>
</feature>
<feature type="active site" description="Proton acceptor" evidence="1">
    <location>
        <position position="107"/>
    </location>
</feature>
<feature type="active site" description="S-methylcysteine intermediate" evidence="1">
    <location>
        <position position="351"/>
    </location>
</feature>
<feature type="binding site" evidence="1">
    <location>
        <position position="127"/>
    </location>
    <ligand>
        <name>[4Fe-4S] cluster</name>
        <dbReference type="ChEBI" id="CHEBI:49883"/>
        <note>4Fe-4S-S-AdoMet</note>
    </ligand>
</feature>
<feature type="binding site" evidence="1">
    <location>
        <position position="131"/>
    </location>
    <ligand>
        <name>[4Fe-4S] cluster</name>
        <dbReference type="ChEBI" id="CHEBI:49883"/>
        <note>4Fe-4S-S-AdoMet</note>
    </ligand>
</feature>
<feature type="binding site" evidence="1">
    <location>
        <position position="134"/>
    </location>
    <ligand>
        <name>[4Fe-4S] cluster</name>
        <dbReference type="ChEBI" id="CHEBI:49883"/>
        <note>4Fe-4S-S-AdoMet</note>
    </ligand>
</feature>
<feature type="binding site" evidence="1">
    <location>
        <begin position="177"/>
        <end position="178"/>
    </location>
    <ligand>
        <name>S-adenosyl-L-methionine</name>
        <dbReference type="ChEBI" id="CHEBI:59789"/>
    </ligand>
</feature>
<feature type="binding site" evidence="1">
    <location>
        <position position="209"/>
    </location>
    <ligand>
        <name>S-adenosyl-L-methionine</name>
        <dbReference type="ChEBI" id="CHEBI:59789"/>
    </ligand>
</feature>
<feature type="binding site" evidence="1">
    <location>
        <begin position="232"/>
        <end position="234"/>
    </location>
    <ligand>
        <name>S-adenosyl-L-methionine</name>
        <dbReference type="ChEBI" id="CHEBI:59789"/>
    </ligand>
</feature>
<feature type="binding site" evidence="1">
    <location>
        <position position="308"/>
    </location>
    <ligand>
        <name>S-adenosyl-L-methionine</name>
        <dbReference type="ChEBI" id="CHEBI:59789"/>
    </ligand>
</feature>
<feature type="disulfide bond" description="(transient)" evidence="1">
    <location>
        <begin position="120"/>
        <end position="351"/>
    </location>
</feature>
<dbReference type="EC" id="2.1.1.192" evidence="1"/>
<dbReference type="EMBL" id="CP000029">
    <property type="protein sequence ID" value="AAW54202.1"/>
    <property type="molecule type" value="Genomic_DNA"/>
</dbReference>
<dbReference type="RefSeq" id="WP_002446258.1">
    <property type="nucleotide sequence ID" value="NC_002976.3"/>
</dbReference>
<dbReference type="SMR" id="Q5HPX3"/>
<dbReference type="STRING" id="176279.SERP0784"/>
<dbReference type="KEGG" id="ser:SERP0784"/>
<dbReference type="eggNOG" id="COG0820">
    <property type="taxonomic scope" value="Bacteria"/>
</dbReference>
<dbReference type="HOGENOM" id="CLU_029101_0_1_9"/>
<dbReference type="Proteomes" id="UP000000531">
    <property type="component" value="Chromosome"/>
</dbReference>
<dbReference type="GO" id="GO:0005737">
    <property type="term" value="C:cytoplasm"/>
    <property type="evidence" value="ECO:0007669"/>
    <property type="project" value="UniProtKB-SubCell"/>
</dbReference>
<dbReference type="GO" id="GO:0051539">
    <property type="term" value="F:4 iron, 4 sulfur cluster binding"/>
    <property type="evidence" value="ECO:0007669"/>
    <property type="project" value="UniProtKB-UniRule"/>
</dbReference>
<dbReference type="GO" id="GO:0046872">
    <property type="term" value="F:metal ion binding"/>
    <property type="evidence" value="ECO:0007669"/>
    <property type="project" value="UniProtKB-KW"/>
</dbReference>
<dbReference type="GO" id="GO:0070040">
    <property type="term" value="F:rRNA (adenine(2503)-C2-)-methyltransferase activity"/>
    <property type="evidence" value="ECO:0007669"/>
    <property type="project" value="UniProtKB-UniRule"/>
</dbReference>
<dbReference type="GO" id="GO:0019843">
    <property type="term" value="F:rRNA binding"/>
    <property type="evidence" value="ECO:0007669"/>
    <property type="project" value="UniProtKB-UniRule"/>
</dbReference>
<dbReference type="GO" id="GO:0002935">
    <property type="term" value="F:tRNA (adenine(37)-C2)-methyltransferase activity"/>
    <property type="evidence" value="ECO:0007669"/>
    <property type="project" value="UniProtKB-UniRule"/>
</dbReference>
<dbReference type="GO" id="GO:0000049">
    <property type="term" value="F:tRNA binding"/>
    <property type="evidence" value="ECO:0007669"/>
    <property type="project" value="UniProtKB-UniRule"/>
</dbReference>
<dbReference type="GO" id="GO:0046677">
    <property type="term" value="P:response to antibiotic"/>
    <property type="evidence" value="ECO:0007669"/>
    <property type="project" value="UniProtKB-KW"/>
</dbReference>
<dbReference type="GO" id="GO:0070475">
    <property type="term" value="P:rRNA base methylation"/>
    <property type="evidence" value="ECO:0007669"/>
    <property type="project" value="UniProtKB-UniRule"/>
</dbReference>
<dbReference type="GO" id="GO:0030488">
    <property type="term" value="P:tRNA methylation"/>
    <property type="evidence" value="ECO:0007669"/>
    <property type="project" value="UniProtKB-UniRule"/>
</dbReference>
<dbReference type="CDD" id="cd01335">
    <property type="entry name" value="Radical_SAM"/>
    <property type="match status" value="1"/>
</dbReference>
<dbReference type="FunFam" id="3.20.20.70:FF:000014">
    <property type="entry name" value="Probable dual-specificity RNA methyltransferase RlmN"/>
    <property type="match status" value="1"/>
</dbReference>
<dbReference type="Gene3D" id="1.10.150.530">
    <property type="match status" value="1"/>
</dbReference>
<dbReference type="Gene3D" id="3.20.20.70">
    <property type="entry name" value="Aldolase class I"/>
    <property type="match status" value="1"/>
</dbReference>
<dbReference type="HAMAP" id="MF_01849">
    <property type="entry name" value="RNA_methyltr_RlmN"/>
    <property type="match status" value="1"/>
</dbReference>
<dbReference type="InterPro" id="IPR013785">
    <property type="entry name" value="Aldolase_TIM"/>
</dbReference>
<dbReference type="InterPro" id="IPR040072">
    <property type="entry name" value="Methyltransferase_A"/>
</dbReference>
<dbReference type="InterPro" id="IPR048641">
    <property type="entry name" value="RlmN_N"/>
</dbReference>
<dbReference type="InterPro" id="IPR027492">
    <property type="entry name" value="RNA_MTrfase_RlmN"/>
</dbReference>
<dbReference type="InterPro" id="IPR004383">
    <property type="entry name" value="rRNA_lsu_MTrfase_RlmN/Cfr"/>
</dbReference>
<dbReference type="InterPro" id="IPR007197">
    <property type="entry name" value="rSAM"/>
</dbReference>
<dbReference type="NCBIfam" id="TIGR00048">
    <property type="entry name" value="rRNA_mod_RlmN"/>
    <property type="match status" value="1"/>
</dbReference>
<dbReference type="PANTHER" id="PTHR30544">
    <property type="entry name" value="23S RRNA METHYLTRANSFERASE"/>
    <property type="match status" value="1"/>
</dbReference>
<dbReference type="PANTHER" id="PTHR30544:SF5">
    <property type="entry name" value="RADICAL SAM CORE DOMAIN-CONTAINING PROTEIN"/>
    <property type="match status" value="1"/>
</dbReference>
<dbReference type="Pfam" id="PF04055">
    <property type="entry name" value="Radical_SAM"/>
    <property type="match status" value="1"/>
</dbReference>
<dbReference type="Pfam" id="PF21016">
    <property type="entry name" value="RlmN_N"/>
    <property type="match status" value="1"/>
</dbReference>
<dbReference type="PIRSF" id="PIRSF006004">
    <property type="entry name" value="CHP00048"/>
    <property type="match status" value="1"/>
</dbReference>
<dbReference type="SFLD" id="SFLDF00275">
    <property type="entry name" value="adenosine_C2_methyltransferase"/>
    <property type="match status" value="1"/>
</dbReference>
<dbReference type="SFLD" id="SFLDS00029">
    <property type="entry name" value="Radical_SAM"/>
    <property type="match status" value="1"/>
</dbReference>
<dbReference type="SUPFAM" id="SSF102114">
    <property type="entry name" value="Radical SAM enzymes"/>
    <property type="match status" value="1"/>
</dbReference>
<dbReference type="PROSITE" id="PS51918">
    <property type="entry name" value="RADICAL_SAM"/>
    <property type="match status" value="1"/>
</dbReference>
<gene>
    <name evidence="1" type="primary">rlmN</name>
    <name type="ordered locus">SERP0784</name>
</gene>
<protein>
    <recommendedName>
        <fullName evidence="1">Probable dual-specificity RNA methyltransferase RlmN</fullName>
        <ecNumber evidence="1">2.1.1.192</ecNumber>
    </recommendedName>
    <alternativeName>
        <fullName evidence="1">23S rRNA (adenine(2503)-C(2))-methyltransferase</fullName>
    </alternativeName>
    <alternativeName>
        <fullName evidence="1">23S rRNA m2A2503 methyltransferase</fullName>
    </alternativeName>
    <alternativeName>
        <fullName evidence="1">Ribosomal RNA large subunit methyltransferase N</fullName>
    </alternativeName>
    <alternativeName>
        <fullName evidence="1">tRNA (adenine(37)-C(2))-methyltransferase</fullName>
    </alternativeName>
    <alternativeName>
        <fullName evidence="1">tRNA m2A37 methyltransferase</fullName>
    </alternativeName>
</protein>
<name>RLMN_STAEQ</name>
<keyword id="KW-0004">4Fe-4S</keyword>
<keyword id="KW-0046">Antibiotic resistance</keyword>
<keyword id="KW-0963">Cytoplasm</keyword>
<keyword id="KW-1015">Disulfide bond</keyword>
<keyword id="KW-0408">Iron</keyword>
<keyword id="KW-0411">Iron-sulfur</keyword>
<keyword id="KW-0479">Metal-binding</keyword>
<keyword id="KW-0489">Methyltransferase</keyword>
<keyword id="KW-1185">Reference proteome</keyword>
<keyword id="KW-0698">rRNA processing</keyword>
<keyword id="KW-0949">S-adenosyl-L-methionine</keyword>
<keyword id="KW-0808">Transferase</keyword>
<keyword id="KW-0819">tRNA processing</keyword>
<accession>Q5HPX3</accession>
<comment type="function">
    <text evidence="1">Specifically methylates position 2 of adenine 2503 in 23S rRNA and position 2 of adenine 37 in tRNAs. Confers resistance to some classes of antibiotics.</text>
</comment>
<comment type="catalytic activity">
    <reaction evidence="1">
        <text>adenosine(2503) in 23S rRNA + 2 reduced [2Fe-2S]-[ferredoxin] + 2 S-adenosyl-L-methionine = 2-methyladenosine(2503) in 23S rRNA + 5'-deoxyadenosine + L-methionine + 2 oxidized [2Fe-2S]-[ferredoxin] + S-adenosyl-L-homocysteine</text>
        <dbReference type="Rhea" id="RHEA:42916"/>
        <dbReference type="Rhea" id="RHEA-COMP:10000"/>
        <dbReference type="Rhea" id="RHEA-COMP:10001"/>
        <dbReference type="Rhea" id="RHEA-COMP:10152"/>
        <dbReference type="Rhea" id="RHEA-COMP:10282"/>
        <dbReference type="ChEBI" id="CHEBI:17319"/>
        <dbReference type="ChEBI" id="CHEBI:33737"/>
        <dbReference type="ChEBI" id="CHEBI:33738"/>
        <dbReference type="ChEBI" id="CHEBI:57844"/>
        <dbReference type="ChEBI" id="CHEBI:57856"/>
        <dbReference type="ChEBI" id="CHEBI:59789"/>
        <dbReference type="ChEBI" id="CHEBI:74411"/>
        <dbReference type="ChEBI" id="CHEBI:74497"/>
        <dbReference type="EC" id="2.1.1.192"/>
    </reaction>
</comment>
<comment type="catalytic activity">
    <reaction evidence="1">
        <text>adenosine(37) in tRNA + 2 reduced [2Fe-2S]-[ferredoxin] + 2 S-adenosyl-L-methionine = 2-methyladenosine(37) in tRNA + 5'-deoxyadenosine + L-methionine + 2 oxidized [2Fe-2S]-[ferredoxin] + S-adenosyl-L-homocysteine</text>
        <dbReference type="Rhea" id="RHEA:43332"/>
        <dbReference type="Rhea" id="RHEA-COMP:10000"/>
        <dbReference type="Rhea" id="RHEA-COMP:10001"/>
        <dbReference type="Rhea" id="RHEA-COMP:10162"/>
        <dbReference type="Rhea" id="RHEA-COMP:10485"/>
        <dbReference type="ChEBI" id="CHEBI:17319"/>
        <dbReference type="ChEBI" id="CHEBI:33737"/>
        <dbReference type="ChEBI" id="CHEBI:33738"/>
        <dbReference type="ChEBI" id="CHEBI:57844"/>
        <dbReference type="ChEBI" id="CHEBI:57856"/>
        <dbReference type="ChEBI" id="CHEBI:59789"/>
        <dbReference type="ChEBI" id="CHEBI:74411"/>
        <dbReference type="ChEBI" id="CHEBI:74497"/>
        <dbReference type="EC" id="2.1.1.192"/>
    </reaction>
</comment>
<comment type="cofactor">
    <cofactor evidence="1">
        <name>[4Fe-4S] cluster</name>
        <dbReference type="ChEBI" id="CHEBI:49883"/>
    </cofactor>
    <text evidence="1">Binds 1 [4Fe-4S] cluster. The cluster is coordinated with 3 cysteines and an exchangeable S-adenosyl-L-methionine.</text>
</comment>
<comment type="subcellular location">
    <subcellularLocation>
        <location evidence="1">Cytoplasm</location>
    </subcellularLocation>
</comment>
<comment type="miscellaneous">
    <text evidence="1">Reaction proceeds by a ping-pong mechanism involving intermediate methylation of a conserved cysteine residue.</text>
</comment>
<comment type="similarity">
    <text evidence="1">Belongs to the radical SAM superfamily. RlmN family.</text>
</comment>
<organism>
    <name type="scientific">Staphylococcus epidermidis (strain ATCC 35984 / DSM 28319 / BCRC 17069 / CCUG 31568 / BM 3577 / RP62A)</name>
    <dbReference type="NCBI Taxonomy" id="176279"/>
    <lineage>
        <taxon>Bacteria</taxon>
        <taxon>Bacillati</taxon>
        <taxon>Bacillota</taxon>
        <taxon>Bacilli</taxon>
        <taxon>Bacillales</taxon>
        <taxon>Staphylococcaceae</taxon>
        <taxon>Staphylococcus</taxon>
    </lineage>
</organism>
<sequence>MITAEKKKKNKFLPNFEKQSIYSLRYDEMQQWLIDHGQQKFRAKQIFEWLYQKRVNTIDEMTNLSKELRQILKDHFAMTTLTTVVKQESKDGTIKFLFELQDGYTIETVLMRHEYGNSVCVTTQVGCRIGCTFCASTLGGLKRNLEAGEIVSQVLTVQKALDETNERVSQIVIMGIGEPFENYDEMMDFLRIVNDDNSLNIGARHITVSTSGIIPRIYDFAEEDIQINFAVSLHGAKDEIRSRLMPINRAYNVDKLMEAIRYYQEKTNRRVTFEYGLFGGVNDQLEHARDLAHLIKDLNCHVNLIPVNHVPERNYVKTPKDDIFKFEKELKRLGINATIRREQGSDIDAACGQLRAKERQVETR</sequence>
<reference key="1">
    <citation type="journal article" date="2005" name="J. Bacteriol.">
        <title>Insights on evolution of virulence and resistance from the complete genome analysis of an early methicillin-resistant Staphylococcus aureus strain and a biofilm-producing methicillin-resistant Staphylococcus epidermidis strain.</title>
        <authorList>
            <person name="Gill S.R."/>
            <person name="Fouts D.E."/>
            <person name="Archer G.L."/>
            <person name="Mongodin E.F."/>
            <person name="DeBoy R.T."/>
            <person name="Ravel J."/>
            <person name="Paulsen I.T."/>
            <person name="Kolonay J.F."/>
            <person name="Brinkac L.M."/>
            <person name="Beanan M.J."/>
            <person name="Dodson R.J."/>
            <person name="Daugherty S.C."/>
            <person name="Madupu R."/>
            <person name="Angiuoli S.V."/>
            <person name="Durkin A.S."/>
            <person name="Haft D.H."/>
            <person name="Vamathevan J.J."/>
            <person name="Khouri H."/>
            <person name="Utterback T.R."/>
            <person name="Lee C."/>
            <person name="Dimitrov G."/>
            <person name="Jiang L."/>
            <person name="Qin H."/>
            <person name="Weidman J."/>
            <person name="Tran K."/>
            <person name="Kang K.H."/>
            <person name="Hance I.R."/>
            <person name="Nelson K.E."/>
            <person name="Fraser C.M."/>
        </authorList>
    </citation>
    <scope>NUCLEOTIDE SEQUENCE [LARGE SCALE GENOMIC DNA]</scope>
    <source>
        <strain>ATCC 35984 / DSM 28319 / BCRC 17069 / CCUG 31568 / BM 3577 / RP62A</strain>
    </source>
</reference>
<evidence type="ECO:0000255" key="1">
    <source>
        <dbReference type="HAMAP-Rule" id="MF_01849"/>
    </source>
</evidence>
<evidence type="ECO:0000255" key="2">
    <source>
        <dbReference type="PROSITE-ProRule" id="PRU01266"/>
    </source>
</evidence>
<proteinExistence type="inferred from homology"/>